<evidence type="ECO:0000250" key="1"/>
<evidence type="ECO:0000305" key="2"/>
<reference key="1">
    <citation type="journal article" date="1979" name="J. Biol. Chem.">
        <title>dnaG (primase)-dependent origins of DNA replication. Nucleotide sequences of the negative strand initiation sites of bacteriophages St-1, phi K, and alpha 3.</title>
        <authorList>
            <person name="Sims J."/>
            <person name="Capon D."/>
            <person name="Dressler D."/>
        </authorList>
    </citation>
    <scope>NUCLEOTIDE SEQUENCE [GENOMIC RNA]</scope>
</reference>
<sequence>MLGSIIGGIGSSLLGGLASGGISSLLNKMFSKMPEHAASSAGLTNGQGTIGMDTDAGIQSVIQGSNVPPAGQLPASNTSGVMADAGNMIRNAGRALLDGTIQA</sequence>
<comment type="function">
    <text evidence="1">Minor spike component of the viral shell. Involved in the ejection of the phage DNA in the host and is injected with the DNA in the periplasmic space of the host. Involved in the determination of the phage host-range (By similarity).</text>
</comment>
<comment type="subunit">
    <text>The virion is composed of 60 copies each of the F, G, and J proteins, and 12 copies of the H protein. There are 12 spikes which are each composed of 5 G and one H proteins.</text>
</comment>
<comment type="subcellular location">
    <subcellularLocation>
        <location evidence="2">Virion</location>
    </subcellularLocation>
</comment>
<name>VGH_BPST1</name>
<protein>
    <recommendedName>
        <fullName>Minor spike protein</fullName>
    </recommendedName>
    <alternativeName>
        <fullName>H protein</fullName>
    </alternativeName>
    <alternativeName>
        <fullName>Pilot protein</fullName>
    </alternativeName>
</protein>
<keyword id="KW-0167">Capsid protein</keyword>
<keyword id="KW-1171">Viral genome ejection through host cell envelope</keyword>
<keyword id="KW-1162">Viral penetration into host cytoplasm</keyword>
<keyword id="KW-0946">Virion</keyword>
<keyword id="KW-1160">Virus entry into host cell</keyword>
<proteinExistence type="inferred from homology"/>
<organismHost>
    <name type="scientific">Escherichia coli (strain K12)</name>
    <dbReference type="NCBI Taxonomy" id="83333"/>
</organismHost>
<gene>
    <name type="primary">H</name>
</gene>
<dbReference type="EMBL" id="J02501">
    <property type="protein sequence ID" value="AAA32607.1"/>
    <property type="molecule type" value="Genomic_RNA"/>
</dbReference>
<dbReference type="PIR" id="A04256">
    <property type="entry name" value="ZHBPS1"/>
</dbReference>
<dbReference type="GO" id="GO:0019028">
    <property type="term" value="C:viral capsid"/>
    <property type="evidence" value="ECO:0007669"/>
    <property type="project" value="UniProtKB-KW"/>
</dbReference>
<dbReference type="GO" id="GO:0046718">
    <property type="term" value="P:symbiont entry into host cell"/>
    <property type="evidence" value="ECO:0007669"/>
    <property type="project" value="UniProtKB-KW"/>
</dbReference>
<dbReference type="InterPro" id="IPR006777">
    <property type="entry name" value="Microvir_H"/>
</dbReference>
<dbReference type="Pfam" id="PF04687">
    <property type="entry name" value="Microvir_H"/>
    <property type="match status" value="1"/>
</dbReference>
<organism>
    <name type="scientific">Escherichia phage St-1</name>
    <name type="common">Bacteriophage St-1</name>
    <dbReference type="NCBI Taxonomy" id="10845"/>
    <lineage>
        <taxon>Viruses</taxon>
        <taxon>Monodnaviria</taxon>
        <taxon>Sangervirae</taxon>
        <taxon>Phixviricota</taxon>
        <taxon>Malgrandaviricetes</taxon>
        <taxon>Petitvirales</taxon>
        <taxon>Microviridae</taxon>
        <taxon>Bullavirinae</taxon>
        <taxon>Alphatrevirus</taxon>
        <taxon>Alphatrevirus St1</taxon>
    </lineage>
</organism>
<feature type="chain" id="PRO_0000164903" description="Minor spike protein">
    <location>
        <begin position="1"/>
        <end position="103" status="greater than"/>
    </location>
</feature>
<feature type="non-terminal residue">
    <location>
        <position position="103"/>
    </location>
</feature>
<accession>P03648</accession>